<accession>C4ZXW7</accession>
<sequence>MMKKPVVIGLAVVVLAAVVAGGYWWYQSRQDNGLTLYGNVDIRTVNLSFRVGGRVESLAVDEGDAIKAGQVLGELDHKPYEIALMQAKAGVSVAQAQYDLMLAGYRNEEIAQAAAAVKQAQAAYDYAQNFYNRQQGLWKSRTISANDLENARSSRDQAQATLKSAQDKLRQYRSGNREQDIAQAKASLEQAQAQLAQAELNLQDSTLIAPSDGTLLTRAVEPGTVLNEGGTVFTVSLTRPVWVRAYVDERNLDQAQPGRKVLLYTDGRPDKPYHGQIGFVSPTAEFTPKTVETPDLRTDLVYRLRIVVTDADDALRQGMPVTVQFGDEAGHE</sequence>
<evidence type="ECO:0000255" key="1">
    <source>
        <dbReference type="HAMAP-Rule" id="MF_01304"/>
    </source>
</evidence>
<protein>
    <recommendedName>
        <fullName evidence="1">UPF0194 membrane protein YbhG</fullName>
    </recommendedName>
</protein>
<organism>
    <name type="scientific">Escherichia coli (strain K12 / MC4100 / BW2952)</name>
    <dbReference type="NCBI Taxonomy" id="595496"/>
    <lineage>
        <taxon>Bacteria</taxon>
        <taxon>Pseudomonadati</taxon>
        <taxon>Pseudomonadota</taxon>
        <taxon>Gammaproteobacteria</taxon>
        <taxon>Enterobacterales</taxon>
        <taxon>Enterobacteriaceae</taxon>
        <taxon>Escherichia</taxon>
    </lineage>
</organism>
<keyword id="KW-0175">Coiled coil</keyword>
<keyword id="KW-0574">Periplasm</keyword>
<keyword id="KW-0732">Signal</keyword>
<name>YBHG_ECOBW</name>
<proteinExistence type="inferred from homology"/>
<comment type="subcellular location">
    <subcellularLocation>
        <location evidence="1">Periplasm</location>
    </subcellularLocation>
</comment>
<comment type="similarity">
    <text evidence="1">Belongs to the UPF0194 family.</text>
</comment>
<reference key="1">
    <citation type="journal article" date="2009" name="J. Bacteriol.">
        <title>Genomic sequencing reveals regulatory mutations and recombinational events in the widely used MC4100 lineage of Escherichia coli K-12.</title>
        <authorList>
            <person name="Ferenci T."/>
            <person name="Zhou Z."/>
            <person name="Betteridge T."/>
            <person name="Ren Y."/>
            <person name="Liu Y."/>
            <person name="Feng L."/>
            <person name="Reeves P.R."/>
            <person name="Wang L."/>
        </authorList>
    </citation>
    <scope>NUCLEOTIDE SEQUENCE [LARGE SCALE GENOMIC DNA]</scope>
    <source>
        <strain>K12 / MC4100 / BW2952</strain>
    </source>
</reference>
<gene>
    <name evidence="1" type="primary">ybhG</name>
    <name type="ordered locus">BWG_0648</name>
</gene>
<feature type="signal peptide" evidence="1">
    <location>
        <begin position="1"/>
        <end position="16"/>
    </location>
</feature>
<feature type="chain" id="PRO_1000214277" description="UPF0194 membrane protein YbhG">
    <location>
        <begin position="17"/>
        <end position="332"/>
    </location>
</feature>
<feature type="coiled-coil region" evidence="1">
    <location>
        <begin position="107"/>
        <end position="209"/>
    </location>
</feature>
<dbReference type="EMBL" id="CP001396">
    <property type="protein sequence ID" value="ACR64646.1"/>
    <property type="molecule type" value="Genomic_DNA"/>
</dbReference>
<dbReference type="SMR" id="C4ZXW7"/>
<dbReference type="KEGG" id="ebw:BWG_0648"/>
<dbReference type="HOGENOM" id="CLU_018816_6_3_6"/>
<dbReference type="GO" id="GO:0042597">
    <property type="term" value="C:periplasmic space"/>
    <property type="evidence" value="ECO:0007669"/>
    <property type="project" value="UniProtKB-SubCell"/>
</dbReference>
<dbReference type="FunFam" id="1.10.287.470:FF:000004">
    <property type="entry name" value="UPF0194 membrane protein YbhG"/>
    <property type="match status" value="1"/>
</dbReference>
<dbReference type="FunFam" id="2.40.30.170:FF:000005">
    <property type="entry name" value="UPF0194 membrane protein YbhG"/>
    <property type="match status" value="1"/>
</dbReference>
<dbReference type="FunFam" id="2.40.50.100:FF:000025">
    <property type="entry name" value="UPF0194 membrane protein YbhG"/>
    <property type="match status" value="1"/>
</dbReference>
<dbReference type="Gene3D" id="2.40.30.170">
    <property type="match status" value="1"/>
</dbReference>
<dbReference type="Gene3D" id="2.40.50.100">
    <property type="match status" value="2"/>
</dbReference>
<dbReference type="Gene3D" id="1.10.287.470">
    <property type="entry name" value="Helix hairpin bin"/>
    <property type="match status" value="1"/>
</dbReference>
<dbReference type="HAMAP" id="MF_01304">
    <property type="entry name" value="UPF0194"/>
    <property type="match status" value="1"/>
</dbReference>
<dbReference type="InterPro" id="IPR032317">
    <property type="entry name" value="CusB_D23"/>
</dbReference>
<dbReference type="InterPro" id="IPR022936">
    <property type="entry name" value="UPF0194_membrane_YbhG"/>
</dbReference>
<dbReference type="InterPro" id="IPR050465">
    <property type="entry name" value="UPF0194_transport"/>
</dbReference>
<dbReference type="NCBIfam" id="NF002939">
    <property type="entry name" value="PRK03598.1"/>
    <property type="match status" value="1"/>
</dbReference>
<dbReference type="PANTHER" id="PTHR32347">
    <property type="entry name" value="EFFLUX SYSTEM COMPONENT YKNX-RELATED"/>
    <property type="match status" value="1"/>
</dbReference>
<dbReference type="PANTHER" id="PTHR32347:SF29">
    <property type="entry name" value="UPF0194 MEMBRANE PROTEIN YBHG"/>
    <property type="match status" value="1"/>
</dbReference>
<dbReference type="Pfam" id="PF16576">
    <property type="entry name" value="HlyD_D23"/>
    <property type="match status" value="1"/>
</dbReference>
<dbReference type="SUPFAM" id="SSF111369">
    <property type="entry name" value="HlyD-like secretion proteins"/>
    <property type="match status" value="2"/>
</dbReference>
<dbReference type="SUPFAM" id="SSF56954">
    <property type="entry name" value="Outer membrane efflux proteins (OEP)"/>
    <property type="match status" value="1"/>
</dbReference>